<proteinExistence type="inferred from homology"/>
<organism>
    <name type="scientific">Symbiobacterium thermophilum (strain DSM 24528 / JCM 14929 / IAM 14863 / T)</name>
    <dbReference type="NCBI Taxonomy" id="292459"/>
    <lineage>
        <taxon>Bacteria</taxon>
        <taxon>Bacillati</taxon>
        <taxon>Bacillota</taxon>
        <taxon>Clostridia</taxon>
        <taxon>Eubacteriales</taxon>
        <taxon>Symbiobacteriaceae</taxon>
        <taxon>Symbiobacterium</taxon>
    </lineage>
</organism>
<protein>
    <recommendedName>
        <fullName evidence="1">Elongation factor G</fullName>
        <shortName evidence="1">EF-G</shortName>
    </recommendedName>
</protein>
<gene>
    <name evidence="1" type="primary">fusA</name>
    <name type="ordered locus">STH3078</name>
</gene>
<comment type="function">
    <text evidence="1">Catalyzes the GTP-dependent ribosomal translocation step during translation elongation. During this step, the ribosome changes from the pre-translocational (PRE) to the post-translocational (POST) state as the newly formed A-site-bound peptidyl-tRNA and P-site-bound deacylated tRNA move to the P and E sites, respectively. Catalyzes the coordinated movement of the two tRNA molecules, the mRNA and conformational changes in the ribosome.</text>
</comment>
<comment type="subcellular location">
    <subcellularLocation>
        <location evidence="1">Cytoplasm</location>
    </subcellularLocation>
</comment>
<comment type="similarity">
    <text evidence="1">Belongs to the TRAFAC class translation factor GTPase superfamily. Classic translation factor GTPase family. EF-G/EF-2 subfamily.</text>
</comment>
<sequence>MSRQVSLDRLRNIGIMAHIDAGKTTTTERILFYTGRTHKLGETHEGAATMDFMVQEQERGITIQSAATTCSWKDHRINIIDTPGHVDFTVEVERSLRVLDGAVAVFCAKGGVEPQSETVWRQADKYGVPRLAYVNKMDTIGADFFRVIRMMEERLGARPVPIQIPIGAEDTFRGVVDLVRNVAIMYYDDLGKDIREEPIPEDMRELVEQYRTRMIEAATEADDALMEKYLMGEELTVEEIKRGLRKLTVECKINPVCCGSSYKNKGVQPLLDAIVDYLPSPLDIPPVQGTDPETGEPAERKADDNEPFSALAFKVVSDPYVGKLCFFRVYSGQLKSGSYVLNATKGKRERIGRLVRMHANHREEVEVVETGDIAAAVGLKDTGTGDTLCTDAAPVILESMEFPEPVIQLAVEPKTKADQDKLSTALLKLAEEDPTFRMFTDPETGQTIIAGMGELHLEIIVDRLQREFKVGVNVGKPQVSYRETVRGRVENVEGRFVRQSGGRGQYGHVVINLEPAEPGSGFIFENKIVGGVIPKEFIGPVEQGIKEALQNGVLAGYPMIDVKVELVFGSYHEVDSSEAAFKIAGSMALKAAAQKAQPVLLEPYMRVEVTVPEEYMGDVIGDLNARRGRIEGMEARGNAQVIRAQVPLAEMFGYATDLRSRTQGRGVYSMQFDHYEEVPPNVAKPIIEKAQGKA</sequence>
<evidence type="ECO:0000255" key="1">
    <source>
        <dbReference type="HAMAP-Rule" id="MF_00054"/>
    </source>
</evidence>
<evidence type="ECO:0000256" key="2">
    <source>
        <dbReference type="SAM" id="MobiDB-lite"/>
    </source>
</evidence>
<accession>Q67JU0</accession>
<keyword id="KW-0963">Cytoplasm</keyword>
<keyword id="KW-0251">Elongation factor</keyword>
<keyword id="KW-0342">GTP-binding</keyword>
<keyword id="KW-0547">Nucleotide-binding</keyword>
<keyword id="KW-0648">Protein biosynthesis</keyword>
<keyword id="KW-1185">Reference proteome</keyword>
<name>EFG_SYMTH</name>
<feature type="chain" id="PRO_0000091239" description="Elongation factor G">
    <location>
        <begin position="1"/>
        <end position="694"/>
    </location>
</feature>
<feature type="domain" description="tr-type G">
    <location>
        <begin position="8"/>
        <end position="282"/>
    </location>
</feature>
<feature type="region of interest" description="Disordered" evidence="2">
    <location>
        <begin position="284"/>
        <end position="303"/>
    </location>
</feature>
<feature type="binding site" evidence="1">
    <location>
        <begin position="17"/>
        <end position="24"/>
    </location>
    <ligand>
        <name>GTP</name>
        <dbReference type="ChEBI" id="CHEBI:37565"/>
    </ligand>
</feature>
<feature type="binding site" evidence="1">
    <location>
        <begin position="81"/>
        <end position="85"/>
    </location>
    <ligand>
        <name>GTP</name>
        <dbReference type="ChEBI" id="CHEBI:37565"/>
    </ligand>
</feature>
<feature type="binding site" evidence="1">
    <location>
        <begin position="135"/>
        <end position="138"/>
    </location>
    <ligand>
        <name>GTP</name>
        <dbReference type="ChEBI" id="CHEBI:37565"/>
    </ligand>
</feature>
<reference key="1">
    <citation type="journal article" date="2004" name="Nucleic Acids Res.">
        <title>Genome sequence of Symbiobacterium thermophilum, an uncultivable bacterium that depends on microbial commensalism.</title>
        <authorList>
            <person name="Ueda K."/>
            <person name="Yamashita A."/>
            <person name="Ishikawa J."/>
            <person name="Shimada M."/>
            <person name="Watsuji T."/>
            <person name="Morimura K."/>
            <person name="Ikeda H."/>
            <person name="Hattori M."/>
            <person name="Beppu T."/>
        </authorList>
    </citation>
    <scope>NUCLEOTIDE SEQUENCE [LARGE SCALE GENOMIC DNA]</scope>
    <source>
        <strain>DSM 24528 / JCM 14929 / IAM 14863 / T</strain>
    </source>
</reference>
<dbReference type="EMBL" id="AP006840">
    <property type="protein sequence ID" value="BAD42060.1"/>
    <property type="molecule type" value="Genomic_DNA"/>
</dbReference>
<dbReference type="RefSeq" id="WP_011197193.1">
    <property type="nucleotide sequence ID" value="NC_006177.1"/>
</dbReference>
<dbReference type="SMR" id="Q67JU0"/>
<dbReference type="STRING" id="292459.STH3078"/>
<dbReference type="KEGG" id="sth:STH3078"/>
<dbReference type="eggNOG" id="COG0480">
    <property type="taxonomic scope" value="Bacteria"/>
</dbReference>
<dbReference type="HOGENOM" id="CLU_002794_4_1_9"/>
<dbReference type="OrthoDB" id="9804431at2"/>
<dbReference type="Proteomes" id="UP000000417">
    <property type="component" value="Chromosome"/>
</dbReference>
<dbReference type="GO" id="GO:0005737">
    <property type="term" value="C:cytoplasm"/>
    <property type="evidence" value="ECO:0007669"/>
    <property type="project" value="UniProtKB-SubCell"/>
</dbReference>
<dbReference type="GO" id="GO:0005525">
    <property type="term" value="F:GTP binding"/>
    <property type="evidence" value="ECO:0007669"/>
    <property type="project" value="UniProtKB-UniRule"/>
</dbReference>
<dbReference type="GO" id="GO:0003924">
    <property type="term" value="F:GTPase activity"/>
    <property type="evidence" value="ECO:0007669"/>
    <property type="project" value="InterPro"/>
</dbReference>
<dbReference type="GO" id="GO:0003746">
    <property type="term" value="F:translation elongation factor activity"/>
    <property type="evidence" value="ECO:0007669"/>
    <property type="project" value="UniProtKB-UniRule"/>
</dbReference>
<dbReference type="GO" id="GO:0032790">
    <property type="term" value="P:ribosome disassembly"/>
    <property type="evidence" value="ECO:0007669"/>
    <property type="project" value="TreeGrafter"/>
</dbReference>
<dbReference type="CDD" id="cd01886">
    <property type="entry name" value="EF-G"/>
    <property type="match status" value="1"/>
</dbReference>
<dbReference type="CDD" id="cd16262">
    <property type="entry name" value="EFG_III"/>
    <property type="match status" value="1"/>
</dbReference>
<dbReference type="CDD" id="cd01434">
    <property type="entry name" value="EFG_mtEFG1_IV"/>
    <property type="match status" value="1"/>
</dbReference>
<dbReference type="CDD" id="cd03713">
    <property type="entry name" value="EFG_mtEFG_C"/>
    <property type="match status" value="1"/>
</dbReference>
<dbReference type="CDD" id="cd04088">
    <property type="entry name" value="EFG_mtEFG_II"/>
    <property type="match status" value="1"/>
</dbReference>
<dbReference type="FunFam" id="2.40.30.10:FF:000006">
    <property type="entry name" value="Elongation factor G"/>
    <property type="match status" value="1"/>
</dbReference>
<dbReference type="FunFam" id="3.30.230.10:FF:000003">
    <property type="entry name" value="Elongation factor G"/>
    <property type="match status" value="1"/>
</dbReference>
<dbReference type="FunFam" id="3.30.70.240:FF:000001">
    <property type="entry name" value="Elongation factor G"/>
    <property type="match status" value="1"/>
</dbReference>
<dbReference type="FunFam" id="3.30.70.870:FF:000001">
    <property type="entry name" value="Elongation factor G"/>
    <property type="match status" value="1"/>
</dbReference>
<dbReference type="FunFam" id="3.40.50.300:FF:000029">
    <property type="entry name" value="Elongation factor G"/>
    <property type="match status" value="1"/>
</dbReference>
<dbReference type="Gene3D" id="3.30.230.10">
    <property type="match status" value="1"/>
</dbReference>
<dbReference type="Gene3D" id="3.30.70.240">
    <property type="match status" value="1"/>
</dbReference>
<dbReference type="Gene3D" id="3.30.70.870">
    <property type="entry name" value="Elongation Factor G (Translational Gtpase), domain 3"/>
    <property type="match status" value="1"/>
</dbReference>
<dbReference type="Gene3D" id="3.40.50.300">
    <property type="entry name" value="P-loop containing nucleotide triphosphate hydrolases"/>
    <property type="match status" value="1"/>
</dbReference>
<dbReference type="Gene3D" id="2.40.30.10">
    <property type="entry name" value="Translation factors"/>
    <property type="match status" value="1"/>
</dbReference>
<dbReference type="HAMAP" id="MF_00054_B">
    <property type="entry name" value="EF_G_EF_2_B"/>
    <property type="match status" value="1"/>
</dbReference>
<dbReference type="InterPro" id="IPR041095">
    <property type="entry name" value="EFG_II"/>
</dbReference>
<dbReference type="InterPro" id="IPR009022">
    <property type="entry name" value="EFG_III"/>
</dbReference>
<dbReference type="InterPro" id="IPR035647">
    <property type="entry name" value="EFG_III/V"/>
</dbReference>
<dbReference type="InterPro" id="IPR047872">
    <property type="entry name" value="EFG_IV"/>
</dbReference>
<dbReference type="InterPro" id="IPR035649">
    <property type="entry name" value="EFG_V"/>
</dbReference>
<dbReference type="InterPro" id="IPR000640">
    <property type="entry name" value="EFG_V-like"/>
</dbReference>
<dbReference type="InterPro" id="IPR004161">
    <property type="entry name" value="EFTu-like_2"/>
</dbReference>
<dbReference type="InterPro" id="IPR031157">
    <property type="entry name" value="G_TR_CS"/>
</dbReference>
<dbReference type="InterPro" id="IPR027417">
    <property type="entry name" value="P-loop_NTPase"/>
</dbReference>
<dbReference type="InterPro" id="IPR020568">
    <property type="entry name" value="Ribosomal_Su5_D2-typ_SF"/>
</dbReference>
<dbReference type="InterPro" id="IPR014721">
    <property type="entry name" value="Ribsml_uS5_D2-typ_fold_subgr"/>
</dbReference>
<dbReference type="InterPro" id="IPR005225">
    <property type="entry name" value="Small_GTP-bd"/>
</dbReference>
<dbReference type="InterPro" id="IPR000795">
    <property type="entry name" value="T_Tr_GTP-bd_dom"/>
</dbReference>
<dbReference type="InterPro" id="IPR009000">
    <property type="entry name" value="Transl_B-barrel_sf"/>
</dbReference>
<dbReference type="InterPro" id="IPR004540">
    <property type="entry name" value="Transl_elong_EFG/EF2"/>
</dbReference>
<dbReference type="InterPro" id="IPR005517">
    <property type="entry name" value="Transl_elong_EFG/EF2_IV"/>
</dbReference>
<dbReference type="NCBIfam" id="TIGR00484">
    <property type="entry name" value="EF-G"/>
    <property type="match status" value="1"/>
</dbReference>
<dbReference type="NCBIfam" id="NF009379">
    <property type="entry name" value="PRK12740.1-3"/>
    <property type="match status" value="1"/>
</dbReference>
<dbReference type="NCBIfam" id="NF009381">
    <property type="entry name" value="PRK12740.1-5"/>
    <property type="match status" value="1"/>
</dbReference>
<dbReference type="NCBIfam" id="TIGR00231">
    <property type="entry name" value="small_GTP"/>
    <property type="match status" value="1"/>
</dbReference>
<dbReference type="PANTHER" id="PTHR43261:SF1">
    <property type="entry name" value="RIBOSOME-RELEASING FACTOR 2, MITOCHONDRIAL"/>
    <property type="match status" value="1"/>
</dbReference>
<dbReference type="PANTHER" id="PTHR43261">
    <property type="entry name" value="TRANSLATION ELONGATION FACTOR G-RELATED"/>
    <property type="match status" value="1"/>
</dbReference>
<dbReference type="Pfam" id="PF00679">
    <property type="entry name" value="EFG_C"/>
    <property type="match status" value="1"/>
</dbReference>
<dbReference type="Pfam" id="PF14492">
    <property type="entry name" value="EFG_III"/>
    <property type="match status" value="1"/>
</dbReference>
<dbReference type="Pfam" id="PF03764">
    <property type="entry name" value="EFG_IV"/>
    <property type="match status" value="1"/>
</dbReference>
<dbReference type="Pfam" id="PF00009">
    <property type="entry name" value="GTP_EFTU"/>
    <property type="match status" value="1"/>
</dbReference>
<dbReference type="Pfam" id="PF03144">
    <property type="entry name" value="GTP_EFTU_D2"/>
    <property type="match status" value="1"/>
</dbReference>
<dbReference type="PRINTS" id="PR00315">
    <property type="entry name" value="ELONGATNFCT"/>
</dbReference>
<dbReference type="SMART" id="SM00838">
    <property type="entry name" value="EFG_C"/>
    <property type="match status" value="1"/>
</dbReference>
<dbReference type="SMART" id="SM00889">
    <property type="entry name" value="EFG_IV"/>
    <property type="match status" value="1"/>
</dbReference>
<dbReference type="SUPFAM" id="SSF54980">
    <property type="entry name" value="EF-G C-terminal domain-like"/>
    <property type="match status" value="2"/>
</dbReference>
<dbReference type="SUPFAM" id="SSF52540">
    <property type="entry name" value="P-loop containing nucleoside triphosphate hydrolases"/>
    <property type="match status" value="1"/>
</dbReference>
<dbReference type="SUPFAM" id="SSF54211">
    <property type="entry name" value="Ribosomal protein S5 domain 2-like"/>
    <property type="match status" value="1"/>
</dbReference>
<dbReference type="SUPFAM" id="SSF50447">
    <property type="entry name" value="Translation proteins"/>
    <property type="match status" value="1"/>
</dbReference>
<dbReference type="PROSITE" id="PS00301">
    <property type="entry name" value="G_TR_1"/>
    <property type="match status" value="1"/>
</dbReference>
<dbReference type="PROSITE" id="PS51722">
    <property type="entry name" value="G_TR_2"/>
    <property type="match status" value="1"/>
</dbReference>